<reference key="1">
    <citation type="journal article" date="2008" name="Toxicon">
        <title>Heterodimeric neurotoxic phospholipases A2 -- the first proteins from venom of recently established species Vipera nikolskii: implication of venom composition in viper systematics.</title>
        <authorList>
            <person name="Ramazanova A.S."/>
            <person name="Zavada L.L."/>
            <person name="Starkov V.G."/>
            <person name="Kovyazina I.V."/>
            <person name="Subbotina T.F."/>
            <person name="Kostyukhina E.E."/>
            <person name="Dementieva I.N."/>
            <person name="Ovchinnikova T.V."/>
            <person name="Utkin Y.N."/>
        </authorList>
    </citation>
    <scope>NUCLEOTIDE SEQUENCE [MRNA]</scope>
    <scope>PROTEIN SEQUENCE OF 17-32</scope>
    <scope>FUNCTION</scope>
    <scope>MASS SPECTROMETRY</scope>
    <source>
        <tissue>Venom</tissue>
        <tissue>Venom gland</tissue>
    </source>
</reference>
<reference key="2">
    <citation type="journal article" date="2009" name="Toxicon">
        <title>Functions, structures and Triton X-100 effect for the catalytic subunits of heterodimeric phospholipases A2 from Vipera nikolskii venom.</title>
        <authorList>
            <person name="Gao W."/>
            <person name="Starkov V.G."/>
            <person name="He Z.X."/>
            <person name="Wang Q.H."/>
            <person name="Tsetlin V.I."/>
            <person name="Utkin Y.N."/>
            <person name="Lin Z.J."/>
            <person name="Bi R.C."/>
        </authorList>
    </citation>
    <scope>X-RAY CRYSTALLOGRAPHY (2.2 ANGSTROMS) OF 17-138</scope>
    <scope>FUNCTION</scope>
    <scope>ACTIVITY REGULATION</scope>
    <scope>DISULFIDE BONDS</scope>
    <source>
        <tissue>Venom</tissue>
    </source>
</reference>
<comment type="function">
    <text>Heterodimer: shows the same activities as the monomer, but with a lower potency.</text>
</comment>
<comment type="function">
    <text evidence="4 5">Monomer: snake venom phospholipase A2 (PLA2) that shows presynaptic neurotoxicity, anticoagulant activity and that weakly inhibits ADP-induced platelet aggregation (PubMed:18083205). Inhibits exocytosis in pancreatic beta cells, confirming it can act presynaptically in inhibiting the exocytosis of neurotransmitters in neurons (PubMed:19500614). PLA2 catalyzes the calcium-dependent hydrolysis of the 2-acyl groups in 3-sn-phosphoglycerides.</text>
</comment>
<comment type="catalytic activity">
    <reaction evidence="2 3">
        <text>a 1,2-diacyl-sn-glycero-3-phosphocholine + H2O = a 1-acyl-sn-glycero-3-phosphocholine + a fatty acid + H(+)</text>
        <dbReference type="Rhea" id="RHEA:15801"/>
        <dbReference type="ChEBI" id="CHEBI:15377"/>
        <dbReference type="ChEBI" id="CHEBI:15378"/>
        <dbReference type="ChEBI" id="CHEBI:28868"/>
        <dbReference type="ChEBI" id="CHEBI:57643"/>
        <dbReference type="ChEBI" id="CHEBI:58168"/>
        <dbReference type="EC" id="3.1.1.4"/>
    </reaction>
</comment>
<comment type="cofactor">
    <cofactor evidence="1">
        <name>Ca(2+)</name>
        <dbReference type="ChEBI" id="CHEBI:29108"/>
    </cofactor>
    <text evidence="1">Binds 1 Ca(2+) ion.</text>
</comment>
<comment type="activity regulation">
    <text evidence="5">Enzymatic activity and neurotoxicity are inhibited by Triton X-100, which has been determined to be located in the center of the hydrophobic channel of the enzyme.</text>
</comment>
<comment type="subunit">
    <text>Heterodimer; non-covalently linked. The toxic basic protein has phospholipase A2 activity (chain HDP-1P) and the non-toxic acidic protein functions as its inhibitor (chain HPD-1I (AC A4VBF0)).</text>
</comment>
<comment type="subcellular location">
    <subcellularLocation>
        <location>Secreted</location>
    </subcellularLocation>
</comment>
<comment type="tissue specificity">
    <text>Expressed by the venom gland.</text>
</comment>
<comment type="mass spectrometry" mass="13798.0" error="1.0" method="MALDI" evidence="4"/>
<comment type="similarity">
    <text evidence="6">Belongs to the phospholipase A2 family. Group II subfamily. D49 sub-subfamily.</text>
</comment>
<proteinExistence type="evidence at protein level"/>
<protein>
    <recommendedName>
        <fullName>Basic phospholipase A2 chain HDP-1P</fullName>
        <shortName>svPLA2</shortName>
        <ecNumber>3.1.1.4</ecNumber>
    </recommendedName>
    <alternativeName>
        <fullName>Heterodimeric neurotoxic phospholipases A2 basic subunit 1</fullName>
    </alternativeName>
    <alternativeName>
        <fullName>Phosphatidylcholine 2-acylhydrolase</fullName>
    </alternativeName>
</protein>
<keyword id="KW-0002">3D-structure</keyword>
<keyword id="KW-1203">Blood coagulation cascade inhibiting toxin</keyword>
<keyword id="KW-0903">Direct protein sequencing</keyword>
<keyword id="KW-1015">Disulfide bond</keyword>
<keyword id="KW-1199">Hemostasis impairing toxin</keyword>
<keyword id="KW-0378">Hydrolase</keyword>
<keyword id="KW-0479">Metal-binding</keyword>
<keyword id="KW-0528">Neurotoxin</keyword>
<keyword id="KW-1201">Platelet aggregation inhibiting toxin</keyword>
<keyword id="KW-0638">Presynaptic neurotoxin</keyword>
<keyword id="KW-0964">Secreted</keyword>
<keyword id="KW-0732">Signal</keyword>
<keyword id="KW-0800">Toxin</keyword>
<sequence length="138" mass="15566">MRILWIVAVCLIGVEGNLFQFAKMINGKLGAFSVWNYISYGCYCGWGGQGTPKDATDRCCFVHDCCYGRVRGCNPKLAIYAYSFKKGNIVCGKNNGCLRDICECDRVAANCFHQNQNTYNKNYKFLSSSRCRQTSEQC</sequence>
<dbReference type="EC" id="3.1.1.4"/>
<dbReference type="EMBL" id="AM238698">
    <property type="protein sequence ID" value="CAJ87658.1"/>
    <property type="molecule type" value="mRNA"/>
</dbReference>
<dbReference type="PDB" id="2I0U">
    <property type="method" value="X-ray"/>
    <property type="resolution" value="2.20 A"/>
    <property type="chains" value="A/E=17-138"/>
</dbReference>
<dbReference type="PDBsum" id="2I0U"/>
<dbReference type="SMR" id="Q1RP79"/>
<dbReference type="EvolutionaryTrace" id="Q1RP79"/>
<dbReference type="GO" id="GO:0005576">
    <property type="term" value="C:extracellular region"/>
    <property type="evidence" value="ECO:0007669"/>
    <property type="project" value="UniProtKB-SubCell"/>
</dbReference>
<dbReference type="GO" id="GO:0005509">
    <property type="term" value="F:calcium ion binding"/>
    <property type="evidence" value="ECO:0007669"/>
    <property type="project" value="InterPro"/>
</dbReference>
<dbReference type="GO" id="GO:0047498">
    <property type="term" value="F:calcium-dependent phospholipase A2 activity"/>
    <property type="evidence" value="ECO:0007669"/>
    <property type="project" value="TreeGrafter"/>
</dbReference>
<dbReference type="GO" id="GO:0005543">
    <property type="term" value="F:phospholipid binding"/>
    <property type="evidence" value="ECO:0007669"/>
    <property type="project" value="TreeGrafter"/>
</dbReference>
<dbReference type="GO" id="GO:0090729">
    <property type="term" value="F:toxin activity"/>
    <property type="evidence" value="ECO:0007669"/>
    <property type="project" value="UniProtKB-KW"/>
</dbReference>
<dbReference type="GO" id="GO:0050482">
    <property type="term" value="P:arachidonate secretion"/>
    <property type="evidence" value="ECO:0007669"/>
    <property type="project" value="InterPro"/>
</dbReference>
<dbReference type="GO" id="GO:0016042">
    <property type="term" value="P:lipid catabolic process"/>
    <property type="evidence" value="ECO:0007669"/>
    <property type="project" value="InterPro"/>
</dbReference>
<dbReference type="GO" id="GO:0042130">
    <property type="term" value="P:negative regulation of T cell proliferation"/>
    <property type="evidence" value="ECO:0007669"/>
    <property type="project" value="TreeGrafter"/>
</dbReference>
<dbReference type="GO" id="GO:0006644">
    <property type="term" value="P:phospholipid metabolic process"/>
    <property type="evidence" value="ECO:0007669"/>
    <property type="project" value="InterPro"/>
</dbReference>
<dbReference type="CDD" id="cd00125">
    <property type="entry name" value="PLA2c"/>
    <property type="match status" value="1"/>
</dbReference>
<dbReference type="FunFam" id="1.20.90.10:FF:000001">
    <property type="entry name" value="Basic phospholipase A2 homolog"/>
    <property type="match status" value="1"/>
</dbReference>
<dbReference type="Gene3D" id="1.20.90.10">
    <property type="entry name" value="Phospholipase A2 domain"/>
    <property type="match status" value="1"/>
</dbReference>
<dbReference type="InterPro" id="IPR001211">
    <property type="entry name" value="PLipase_A2"/>
</dbReference>
<dbReference type="InterPro" id="IPR033112">
    <property type="entry name" value="PLipase_A2_Asp_AS"/>
</dbReference>
<dbReference type="InterPro" id="IPR016090">
    <property type="entry name" value="PLipase_A2_dom"/>
</dbReference>
<dbReference type="InterPro" id="IPR036444">
    <property type="entry name" value="PLipase_A2_dom_sf"/>
</dbReference>
<dbReference type="InterPro" id="IPR033113">
    <property type="entry name" value="PLipase_A2_His_AS"/>
</dbReference>
<dbReference type="PANTHER" id="PTHR11716">
    <property type="entry name" value="PHOSPHOLIPASE A2 FAMILY MEMBER"/>
    <property type="match status" value="1"/>
</dbReference>
<dbReference type="PANTHER" id="PTHR11716:SF9">
    <property type="entry name" value="PHOSPHOLIPASE A2, MEMBRANE ASSOCIATED"/>
    <property type="match status" value="1"/>
</dbReference>
<dbReference type="Pfam" id="PF00068">
    <property type="entry name" value="Phospholip_A2_1"/>
    <property type="match status" value="1"/>
</dbReference>
<dbReference type="PRINTS" id="PR00389">
    <property type="entry name" value="PHPHLIPASEA2"/>
</dbReference>
<dbReference type="SMART" id="SM00085">
    <property type="entry name" value="PA2c"/>
    <property type="match status" value="1"/>
</dbReference>
<dbReference type="SUPFAM" id="SSF48619">
    <property type="entry name" value="Phospholipase A2, PLA2"/>
    <property type="match status" value="1"/>
</dbReference>
<dbReference type="PROSITE" id="PS00119">
    <property type="entry name" value="PA2_ASP"/>
    <property type="match status" value="1"/>
</dbReference>
<dbReference type="PROSITE" id="PS00118">
    <property type="entry name" value="PA2_HIS"/>
    <property type="match status" value="1"/>
</dbReference>
<name>PA2B1_VIPNI</name>
<feature type="signal peptide" evidence="4">
    <location>
        <begin position="1"/>
        <end position="16"/>
    </location>
</feature>
<feature type="chain" id="PRO_5000079752" description="Basic phospholipase A2 chain HDP-1P">
    <location>
        <begin position="17"/>
        <end position="138"/>
    </location>
</feature>
<feature type="active site" evidence="1">
    <location>
        <position position="63"/>
    </location>
</feature>
<feature type="active site" evidence="1">
    <location>
        <position position="105"/>
    </location>
</feature>
<feature type="binding site" evidence="1">
    <location>
        <position position="43"/>
    </location>
    <ligand>
        <name>Ca(2+)</name>
        <dbReference type="ChEBI" id="CHEBI:29108"/>
    </ligand>
</feature>
<feature type="binding site" evidence="1">
    <location>
        <position position="45"/>
    </location>
    <ligand>
        <name>Ca(2+)</name>
        <dbReference type="ChEBI" id="CHEBI:29108"/>
    </ligand>
</feature>
<feature type="binding site" evidence="1">
    <location>
        <position position="47"/>
    </location>
    <ligand>
        <name>Ca(2+)</name>
        <dbReference type="ChEBI" id="CHEBI:29108"/>
    </ligand>
</feature>
<feature type="binding site" evidence="1">
    <location>
        <position position="64"/>
    </location>
    <ligand>
        <name>Ca(2+)</name>
        <dbReference type="ChEBI" id="CHEBI:29108"/>
    </ligand>
</feature>
<feature type="disulfide bond" evidence="5">
    <location>
        <begin position="42"/>
        <end position="131"/>
    </location>
</feature>
<feature type="disulfide bond" evidence="5">
    <location>
        <begin position="44"/>
        <end position="60"/>
    </location>
</feature>
<feature type="disulfide bond" evidence="5">
    <location>
        <begin position="59"/>
        <end position="111"/>
    </location>
</feature>
<feature type="disulfide bond" evidence="5">
    <location>
        <begin position="65"/>
        <end position="138"/>
    </location>
</feature>
<feature type="disulfide bond" evidence="5">
    <location>
        <begin position="66"/>
        <end position="104"/>
    </location>
</feature>
<feature type="disulfide bond" evidence="5">
    <location>
        <begin position="73"/>
        <end position="97"/>
    </location>
</feature>
<feature type="disulfide bond" evidence="5">
    <location>
        <begin position="91"/>
        <end position="102"/>
    </location>
</feature>
<feature type="helix" evidence="7">
    <location>
        <begin position="18"/>
        <end position="29"/>
    </location>
</feature>
<feature type="helix" evidence="7">
    <location>
        <begin position="33"/>
        <end position="37"/>
    </location>
</feature>
<feature type="strand" evidence="7">
    <location>
        <begin position="38"/>
        <end position="40"/>
    </location>
</feature>
<feature type="turn" evidence="7">
    <location>
        <begin position="41"/>
        <end position="43"/>
    </location>
</feature>
<feature type="strand" evidence="7">
    <location>
        <begin position="44"/>
        <end position="46"/>
    </location>
</feature>
<feature type="helix" evidence="7">
    <location>
        <begin position="55"/>
        <end position="69"/>
    </location>
</feature>
<feature type="turn" evidence="7">
    <location>
        <begin position="75"/>
        <end position="77"/>
    </location>
</feature>
<feature type="strand" evidence="7">
    <location>
        <begin position="82"/>
        <end position="85"/>
    </location>
</feature>
<feature type="strand" evidence="7">
    <location>
        <begin position="88"/>
        <end position="91"/>
    </location>
</feature>
<feature type="helix" evidence="7">
    <location>
        <begin position="97"/>
        <end position="114"/>
    </location>
</feature>
<feature type="turn" evidence="7">
    <location>
        <begin position="115"/>
        <end position="118"/>
    </location>
</feature>
<feature type="helix" evidence="7">
    <location>
        <begin position="121"/>
        <end position="123"/>
    </location>
</feature>
<feature type="helix" evidence="7">
    <location>
        <begin position="128"/>
        <end position="130"/>
    </location>
</feature>
<accession>Q1RP79</accession>
<organism>
    <name type="scientific">Vipera nikolskii</name>
    <name type="common">Nikolsky's adder</name>
    <name type="synonym">Vipera berus nikolskii</name>
    <dbReference type="NCBI Taxonomy" id="1808362"/>
    <lineage>
        <taxon>Eukaryota</taxon>
        <taxon>Metazoa</taxon>
        <taxon>Chordata</taxon>
        <taxon>Craniata</taxon>
        <taxon>Vertebrata</taxon>
        <taxon>Euteleostomi</taxon>
        <taxon>Lepidosauria</taxon>
        <taxon>Squamata</taxon>
        <taxon>Bifurcata</taxon>
        <taxon>Unidentata</taxon>
        <taxon>Episquamata</taxon>
        <taxon>Toxicofera</taxon>
        <taxon>Serpentes</taxon>
        <taxon>Colubroidea</taxon>
        <taxon>Viperidae</taxon>
        <taxon>Viperinae</taxon>
        <taxon>Vipera</taxon>
    </lineage>
</organism>
<evidence type="ECO:0000250" key="1"/>
<evidence type="ECO:0000255" key="2">
    <source>
        <dbReference type="PROSITE-ProRule" id="PRU10035"/>
    </source>
</evidence>
<evidence type="ECO:0000255" key="3">
    <source>
        <dbReference type="PROSITE-ProRule" id="PRU10036"/>
    </source>
</evidence>
<evidence type="ECO:0000269" key="4">
    <source>
    </source>
</evidence>
<evidence type="ECO:0000269" key="5">
    <source>
    </source>
</evidence>
<evidence type="ECO:0000305" key="6"/>
<evidence type="ECO:0007829" key="7">
    <source>
        <dbReference type="PDB" id="2I0U"/>
    </source>
</evidence>